<evidence type="ECO:0000250" key="1"/>
<evidence type="ECO:0000255" key="2"/>
<evidence type="ECO:0000255" key="3">
    <source>
        <dbReference type="PROSITE-ProRule" id="PRU01161"/>
    </source>
</evidence>
<evidence type="ECO:0000269" key="4">
    <source>
    </source>
</evidence>
<evidence type="ECO:0000305" key="5"/>
<comment type="function">
    <text evidence="1">Probable lipolytic acyl hydrolase (LAH), an activity which is thought to be involved in the response of tubers to pathogens.</text>
</comment>
<comment type="subcellular location">
    <subcellularLocation>
        <location evidence="1">Vacuole</location>
    </subcellularLocation>
</comment>
<comment type="tissue specificity">
    <text evidence="4">Tuber and stolon.</text>
</comment>
<comment type="developmental stage">
    <text evidence="4">Accumulates progressively during tuber formation from stolon.</text>
</comment>
<comment type="domain">
    <text>The nitrogen atoms of the two glycine residues in the GGXR motif define the oxyanion hole, and stabilize the oxyanion that forms during the nucleophilic attack by the catalytic serine during substrate cleavage.</text>
</comment>
<comment type="miscellaneous">
    <text>Patatin have a dual role as a somatic storage protein and as an enzyme involved in host resistance.</text>
</comment>
<comment type="similarity">
    <text evidence="5">Belongs to the patatin family.</text>
</comment>
<keyword id="KW-0175">Coiled coil</keyword>
<keyword id="KW-0325">Glycoprotein</keyword>
<keyword id="KW-0378">Hydrolase</keyword>
<keyword id="KW-0442">Lipid degradation</keyword>
<keyword id="KW-0443">Lipid metabolism</keyword>
<keyword id="KW-0611">Plant defense</keyword>
<keyword id="KW-1185">Reference proteome</keyword>
<keyword id="KW-0732">Signal</keyword>
<keyword id="KW-0758">Storage protein</keyword>
<keyword id="KW-0926">Vacuole</keyword>
<reference key="1">
    <citation type="journal article" date="2006" name="Genetics">
        <title>Structural diversity and differential transcription of the patatin multicopy gene family during potato tuber development.</title>
        <authorList>
            <person name="Stupar R.M."/>
            <person name="Beaubien K.A."/>
            <person name="Jin W."/>
            <person name="Song J."/>
            <person name="Lee M.-K."/>
            <person name="Wu C."/>
            <person name="Zhang H.-B."/>
            <person name="Han B."/>
            <person name="Jiang J."/>
        </authorList>
    </citation>
    <scope>NUCLEOTIDE SEQUENCE [MRNA]</scope>
    <scope>DEVELOPMENTAL STAGE</scope>
    <scope>TISSUE SPECIFICITY</scope>
    <source>
        <strain>cv. Kennebec</strain>
    </source>
</reference>
<name>PATA3_SOLTU</name>
<protein>
    <recommendedName>
        <fullName>Patatin group A-3</fullName>
        <ecNumber>3.1.1.-</ecNumber>
    </recommendedName>
</protein>
<sequence>MATTKSFLILIVMILATTSSTFASLEEMVTVLSIDGGGVKGIIPGTILEFLEGQLQKMDNNADARLADYFDVIGGTSTGGLLTAMITTPNENNRPFAAANEIVPFYFEHGPHIFNSSTGQFFGPKYDGKYLMQVLQEKLGETRVHQALTEVAISSFDIKTNKPVIFTKSNLAKSPELDAKMYDICYSTAAAPTYFPPHYFATNTINGDKYEFNLVDGAVATVADPALLSVSVATRRAQEDPAFASIRSLNYKKMLLLSLGTGTTSEFDKTHTAEETAKWGALQWMLVIQQMTEAASSYMTDYYLSTVFQDLHSQNNYLRVQENALTGTTTKADDASEANMELLAQVGENLLKKPVSKDNPETYEEALKRFAKLLSDRKKLRANKASY</sequence>
<feature type="signal peptide" evidence="2">
    <location>
        <begin position="1"/>
        <end position="23"/>
    </location>
</feature>
<feature type="chain" id="PRO_0000296703" description="Patatin group A-3">
    <location>
        <begin position="24"/>
        <end position="387"/>
    </location>
</feature>
<feature type="domain" description="PNPLA" evidence="3">
    <location>
        <begin position="32"/>
        <end position="230"/>
    </location>
</feature>
<feature type="coiled-coil region" evidence="2">
    <location>
        <begin position="361"/>
        <end position="385"/>
    </location>
</feature>
<feature type="short sequence motif" description="GXGXXG" evidence="3">
    <location>
        <begin position="36"/>
        <end position="41"/>
    </location>
</feature>
<feature type="short sequence motif" description="GXSXG" evidence="3">
    <location>
        <begin position="75"/>
        <end position="79"/>
    </location>
</feature>
<feature type="short sequence motif" description="DGA/G" evidence="3">
    <location>
        <begin position="216"/>
        <end position="218"/>
    </location>
</feature>
<feature type="active site" description="Nucleophile" evidence="3">
    <location>
        <position position="77"/>
    </location>
</feature>
<feature type="active site" description="Proton acceptor" evidence="3">
    <location>
        <position position="216"/>
    </location>
</feature>
<feature type="glycosylation site" description="N-linked (GlcNAc...) asparagine" evidence="2">
    <location>
        <position position="115"/>
    </location>
</feature>
<accession>Q2MY58</accession>
<dbReference type="EC" id="3.1.1.-"/>
<dbReference type="EMBL" id="DQ274480">
    <property type="protein sequence ID" value="ABC55680.1"/>
    <property type="molecule type" value="mRNA"/>
</dbReference>
<dbReference type="SMR" id="Q2MY58"/>
<dbReference type="InParanoid" id="Q2MY58"/>
<dbReference type="Proteomes" id="UP000011115">
    <property type="component" value="Unassembled WGS sequence"/>
</dbReference>
<dbReference type="ExpressionAtlas" id="Q2MY58">
    <property type="expression patterns" value="baseline and differential"/>
</dbReference>
<dbReference type="GO" id="GO:0005773">
    <property type="term" value="C:vacuole"/>
    <property type="evidence" value="ECO:0007669"/>
    <property type="project" value="UniProtKB-SubCell"/>
</dbReference>
<dbReference type="GO" id="GO:0047372">
    <property type="term" value="F:monoacylglycerol lipase activity"/>
    <property type="evidence" value="ECO:0000318"/>
    <property type="project" value="GO_Central"/>
</dbReference>
<dbReference type="GO" id="GO:0045735">
    <property type="term" value="F:nutrient reservoir activity"/>
    <property type="evidence" value="ECO:0007669"/>
    <property type="project" value="UniProtKB-KW"/>
</dbReference>
<dbReference type="GO" id="GO:0004620">
    <property type="term" value="F:phospholipase activity"/>
    <property type="evidence" value="ECO:0000318"/>
    <property type="project" value="GO_Central"/>
</dbReference>
<dbReference type="GO" id="GO:0006952">
    <property type="term" value="P:defense response"/>
    <property type="evidence" value="ECO:0007669"/>
    <property type="project" value="UniProtKB-KW"/>
</dbReference>
<dbReference type="GO" id="GO:0016042">
    <property type="term" value="P:lipid catabolic process"/>
    <property type="evidence" value="ECO:0007669"/>
    <property type="project" value="UniProtKB-KW"/>
</dbReference>
<dbReference type="CDD" id="cd07214">
    <property type="entry name" value="Pat17_isozyme_like"/>
    <property type="match status" value="1"/>
</dbReference>
<dbReference type="Gene3D" id="3.40.1090.10">
    <property type="entry name" value="Cytosolic phospholipase A2 catalytic domain"/>
    <property type="match status" value="1"/>
</dbReference>
<dbReference type="InterPro" id="IPR016035">
    <property type="entry name" value="Acyl_Trfase/lysoPLipase"/>
</dbReference>
<dbReference type="InterPro" id="IPR002641">
    <property type="entry name" value="PNPLA_dom"/>
</dbReference>
<dbReference type="PANTHER" id="PTHR32176:SF85">
    <property type="entry name" value="PATATIN GROUP D-2"/>
    <property type="match status" value="1"/>
</dbReference>
<dbReference type="PANTHER" id="PTHR32176">
    <property type="entry name" value="XYLOSE ISOMERASE"/>
    <property type="match status" value="1"/>
</dbReference>
<dbReference type="Pfam" id="PF01734">
    <property type="entry name" value="Patatin"/>
    <property type="match status" value="1"/>
</dbReference>
<dbReference type="SUPFAM" id="SSF52151">
    <property type="entry name" value="FabD/lysophospholipase-like"/>
    <property type="match status" value="1"/>
</dbReference>
<dbReference type="PROSITE" id="PS51635">
    <property type="entry name" value="PNPLA"/>
    <property type="match status" value="1"/>
</dbReference>
<proteinExistence type="evidence at transcript level"/>
<organism>
    <name type="scientific">Solanum tuberosum</name>
    <name type="common">Potato</name>
    <dbReference type="NCBI Taxonomy" id="4113"/>
    <lineage>
        <taxon>Eukaryota</taxon>
        <taxon>Viridiplantae</taxon>
        <taxon>Streptophyta</taxon>
        <taxon>Embryophyta</taxon>
        <taxon>Tracheophyta</taxon>
        <taxon>Spermatophyta</taxon>
        <taxon>Magnoliopsida</taxon>
        <taxon>eudicotyledons</taxon>
        <taxon>Gunneridae</taxon>
        <taxon>Pentapetalae</taxon>
        <taxon>asterids</taxon>
        <taxon>lamiids</taxon>
        <taxon>Solanales</taxon>
        <taxon>Solanaceae</taxon>
        <taxon>Solanoideae</taxon>
        <taxon>Solaneae</taxon>
        <taxon>Solanum</taxon>
    </lineage>
</organism>